<keyword id="KW-0053">Apoptosis</keyword>
<keyword id="KW-0458">Lysosome</keyword>
<keyword id="KW-0472">Membrane</keyword>
<keyword id="KW-0479">Metal-binding</keyword>
<keyword id="KW-1267">Proteomics identification</keyword>
<keyword id="KW-1185">Reference proteome</keyword>
<keyword id="KW-0808">Transferase</keyword>
<keyword id="KW-0812">Transmembrane</keyword>
<keyword id="KW-1133">Transmembrane helix</keyword>
<keyword id="KW-0832">Ubl conjugation</keyword>
<keyword id="KW-0833">Ubl conjugation pathway</keyword>
<keyword id="KW-0862">Zinc</keyword>
<keyword id="KW-0863">Zinc-finger</keyword>
<accession>Q8N8N0</accession>
<accession>B3KV99</accession>
<accession>Q52LA4</accession>
<evidence type="ECO:0000250" key="1">
    <source>
        <dbReference type="UniProtKB" id="Q8BG47"/>
    </source>
</evidence>
<evidence type="ECO:0000255" key="2"/>
<evidence type="ECO:0000255" key="3">
    <source>
        <dbReference type="PROSITE-ProRule" id="PRU00175"/>
    </source>
</evidence>
<evidence type="ECO:0000269" key="4">
    <source>
    </source>
</evidence>
<evidence type="ECO:0000269" key="5">
    <source>
    </source>
</evidence>
<evidence type="ECO:0000269" key="6">
    <source>
    </source>
</evidence>
<evidence type="ECO:0000305" key="7"/>
<evidence type="ECO:0000305" key="8">
    <source>
    </source>
</evidence>
<evidence type="ECO:0000312" key="9">
    <source>
        <dbReference type="HGNC" id="HGNC:26811"/>
    </source>
</evidence>
<protein>
    <recommendedName>
        <fullName evidence="7">E3 ubiquitin-protein ligase RNF152</fullName>
        <ecNumber evidence="5 6">2.3.2.27</ecNumber>
    </recommendedName>
    <alternativeName>
        <fullName evidence="9">RING finger protein 152</fullName>
    </alternativeName>
    <alternativeName>
        <fullName evidence="7">RING-type E3 ubiquitin transferase RNF152</fullName>
    </alternativeName>
</protein>
<reference key="1">
    <citation type="journal article" date="2004" name="Nat. Genet.">
        <title>Complete sequencing and characterization of 21,243 full-length human cDNAs.</title>
        <authorList>
            <person name="Ota T."/>
            <person name="Suzuki Y."/>
            <person name="Nishikawa T."/>
            <person name="Otsuki T."/>
            <person name="Sugiyama T."/>
            <person name="Irie R."/>
            <person name="Wakamatsu A."/>
            <person name="Hayashi K."/>
            <person name="Sato H."/>
            <person name="Nagai K."/>
            <person name="Kimura K."/>
            <person name="Makita H."/>
            <person name="Sekine M."/>
            <person name="Obayashi M."/>
            <person name="Nishi T."/>
            <person name="Shibahara T."/>
            <person name="Tanaka T."/>
            <person name="Ishii S."/>
            <person name="Yamamoto J."/>
            <person name="Saito K."/>
            <person name="Kawai Y."/>
            <person name="Isono Y."/>
            <person name="Nakamura Y."/>
            <person name="Nagahari K."/>
            <person name="Murakami K."/>
            <person name="Yasuda T."/>
            <person name="Iwayanagi T."/>
            <person name="Wagatsuma M."/>
            <person name="Shiratori A."/>
            <person name="Sudo H."/>
            <person name="Hosoiri T."/>
            <person name="Kaku Y."/>
            <person name="Kodaira H."/>
            <person name="Kondo H."/>
            <person name="Sugawara M."/>
            <person name="Takahashi M."/>
            <person name="Kanda K."/>
            <person name="Yokoi T."/>
            <person name="Furuya T."/>
            <person name="Kikkawa E."/>
            <person name="Omura Y."/>
            <person name="Abe K."/>
            <person name="Kamihara K."/>
            <person name="Katsuta N."/>
            <person name="Sato K."/>
            <person name="Tanikawa M."/>
            <person name="Yamazaki M."/>
            <person name="Ninomiya K."/>
            <person name="Ishibashi T."/>
            <person name="Yamashita H."/>
            <person name="Murakawa K."/>
            <person name="Fujimori K."/>
            <person name="Tanai H."/>
            <person name="Kimata M."/>
            <person name="Watanabe M."/>
            <person name="Hiraoka S."/>
            <person name="Chiba Y."/>
            <person name="Ishida S."/>
            <person name="Ono Y."/>
            <person name="Takiguchi S."/>
            <person name="Watanabe S."/>
            <person name="Yosida M."/>
            <person name="Hotuta T."/>
            <person name="Kusano J."/>
            <person name="Kanehori K."/>
            <person name="Takahashi-Fujii A."/>
            <person name="Hara H."/>
            <person name="Tanase T.-O."/>
            <person name="Nomura Y."/>
            <person name="Togiya S."/>
            <person name="Komai F."/>
            <person name="Hara R."/>
            <person name="Takeuchi K."/>
            <person name="Arita M."/>
            <person name="Imose N."/>
            <person name="Musashino K."/>
            <person name="Yuuki H."/>
            <person name="Oshima A."/>
            <person name="Sasaki N."/>
            <person name="Aotsuka S."/>
            <person name="Yoshikawa Y."/>
            <person name="Matsunawa H."/>
            <person name="Ichihara T."/>
            <person name="Shiohata N."/>
            <person name="Sano S."/>
            <person name="Moriya S."/>
            <person name="Momiyama H."/>
            <person name="Satoh N."/>
            <person name="Takami S."/>
            <person name="Terashima Y."/>
            <person name="Suzuki O."/>
            <person name="Nakagawa S."/>
            <person name="Senoh A."/>
            <person name="Mizoguchi H."/>
            <person name="Goto Y."/>
            <person name="Shimizu F."/>
            <person name="Wakebe H."/>
            <person name="Hishigaki H."/>
            <person name="Watanabe T."/>
            <person name="Sugiyama A."/>
            <person name="Takemoto M."/>
            <person name="Kawakami B."/>
            <person name="Yamazaki M."/>
            <person name="Watanabe K."/>
            <person name="Kumagai A."/>
            <person name="Itakura S."/>
            <person name="Fukuzumi Y."/>
            <person name="Fujimori Y."/>
            <person name="Komiyama M."/>
            <person name="Tashiro H."/>
            <person name="Tanigami A."/>
            <person name="Fujiwara T."/>
            <person name="Ono T."/>
            <person name="Yamada K."/>
            <person name="Fujii Y."/>
            <person name="Ozaki K."/>
            <person name="Hirao M."/>
            <person name="Ohmori Y."/>
            <person name="Kawabata A."/>
            <person name="Hikiji T."/>
            <person name="Kobatake N."/>
            <person name="Inagaki H."/>
            <person name="Ikema Y."/>
            <person name="Okamoto S."/>
            <person name="Okitani R."/>
            <person name="Kawakami T."/>
            <person name="Noguchi S."/>
            <person name="Itoh T."/>
            <person name="Shigeta K."/>
            <person name="Senba T."/>
            <person name="Matsumura K."/>
            <person name="Nakajima Y."/>
            <person name="Mizuno T."/>
            <person name="Morinaga M."/>
            <person name="Sasaki M."/>
            <person name="Togashi T."/>
            <person name="Oyama M."/>
            <person name="Hata H."/>
            <person name="Watanabe M."/>
            <person name="Komatsu T."/>
            <person name="Mizushima-Sugano J."/>
            <person name="Satoh T."/>
            <person name="Shirai Y."/>
            <person name="Takahashi Y."/>
            <person name="Nakagawa K."/>
            <person name="Okumura K."/>
            <person name="Nagase T."/>
            <person name="Nomura N."/>
            <person name="Kikuchi H."/>
            <person name="Masuho Y."/>
            <person name="Yamashita R."/>
            <person name="Nakai K."/>
            <person name="Yada T."/>
            <person name="Nakamura Y."/>
            <person name="Ohara O."/>
            <person name="Isogai T."/>
            <person name="Sugano S."/>
        </authorList>
    </citation>
    <scope>NUCLEOTIDE SEQUENCE [LARGE SCALE MRNA]</scope>
    <source>
        <tissue>Brain</tissue>
    </source>
</reference>
<reference key="2">
    <citation type="journal article" date="2005" name="Nature">
        <title>DNA sequence and analysis of human chromosome 18.</title>
        <authorList>
            <person name="Nusbaum C."/>
            <person name="Zody M.C."/>
            <person name="Borowsky M.L."/>
            <person name="Kamal M."/>
            <person name="Kodira C.D."/>
            <person name="Taylor T.D."/>
            <person name="Whittaker C.A."/>
            <person name="Chang J.L."/>
            <person name="Cuomo C.A."/>
            <person name="Dewar K."/>
            <person name="FitzGerald M.G."/>
            <person name="Yang X."/>
            <person name="Abouelleil A."/>
            <person name="Allen N.R."/>
            <person name="Anderson S."/>
            <person name="Bloom T."/>
            <person name="Bugalter B."/>
            <person name="Butler J."/>
            <person name="Cook A."/>
            <person name="DeCaprio D."/>
            <person name="Engels R."/>
            <person name="Garber M."/>
            <person name="Gnirke A."/>
            <person name="Hafez N."/>
            <person name="Hall J.L."/>
            <person name="Norman C.H."/>
            <person name="Itoh T."/>
            <person name="Jaffe D.B."/>
            <person name="Kuroki Y."/>
            <person name="Lehoczky J."/>
            <person name="Lui A."/>
            <person name="Macdonald P."/>
            <person name="Mauceli E."/>
            <person name="Mikkelsen T.S."/>
            <person name="Naylor J.W."/>
            <person name="Nicol R."/>
            <person name="Nguyen C."/>
            <person name="Noguchi H."/>
            <person name="O'Leary S.B."/>
            <person name="Piqani B."/>
            <person name="Smith C.L."/>
            <person name="Talamas J.A."/>
            <person name="Topham K."/>
            <person name="Totoki Y."/>
            <person name="Toyoda A."/>
            <person name="Wain H.M."/>
            <person name="Young S.K."/>
            <person name="Zeng Q."/>
            <person name="Zimmer A.R."/>
            <person name="Fujiyama A."/>
            <person name="Hattori M."/>
            <person name="Birren B.W."/>
            <person name="Sakaki Y."/>
            <person name="Lander E.S."/>
        </authorList>
    </citation>
    <scope>NUCLEOTIDE SEQUENCE [LARGE SCALE GENOMIC DNA]</scope>
</reference>
<reference key="3">
    <citation type="journal article" date="2004" name="Genome Res.">
        <title>The status, quality, and expansion of the NIH full-length cDNA project: the Mammalian Gene Collection (MGC).</title>
        <authorList>
            <consortium name="The MGC Project Team"/>
        </authorList>
    </citation>
    <scope>NUCLEOTIDE SEQUENCE [LARGE SCALE MRNA]</scope>
</reference>
<reference key="4">
    <citation type="journal article" date="2010" name="Protein Cell">
        <title>RNF152, a novel lysosome localized E3 ligase with pro-apoptotic activities.</title>
        <authorList>
            <person name="Zhang S."/>
            <person name="Wu W."/>
            <person name="Wu Y."/>
            <person name="Zheng J."/>
            <person name="Suo T."/>
            <person name="Tang H."/>
            <person name="Tang J."/>
        </authorList>
    </citation>
    <scope>FUNCTION</scope>
    <scope>SUBCELLULAR LOCATION</scope>
    <scope>UBIQUITINATION</scope>
    <scope>TISSUE SPECIFICITY</scope>
</reference>
<reference key="5">
    <citation type="journal article" date="2015" name="Mol. Cell">
        <title>The ubiquitination of RagA GTPase by RNF152 negatively regulates mTORC1 activation.</title>
        <authorList>
            <person name="Deng L."/>
            <person name="Jiang C."/>
            <person name="Chen L."/>
            <person name="Jin J."/>
            <person name="Wei J."/>
            <person name="Zhao L."/>
            <person name="Chen M."/>
            <person name="Pan W."/>
            <person name="Xu Y."/>
            <person name="Chu H."/>
            <person name="Wang X."/>
            <person name="Ge X."/>
            <person name="Li D."/>
            <person name="Liao L."/>
            <person name="Liu M."/>
            <person name="Li L."/>
            <person name="Wang P."/>
        </authorList>
    </citation>
    <scope>FUNCTION</scope>
    <scope>CATALYTIC ACTIVITY</scope>
    <scope>PATHWAY</scope>
    <scope>SUBCELLULAR LOCATION</scope>
    <scope>INTERACTION WITH RRAGA</scope>
    <scope>REGION</scope>
</reference>
<reference key="6">
    <citation type="journal article" date="2019" name="Cell Res.">
        <title>Ubiquitination of Rheb governs growth factor-induced mTORC1 activation.</title>
        <authorList>
            <person name="Deng L."/>
            <person name="Chen L."/>
            <person name="Zhao L."/>
            <person name="Xu Y."/>
            <person name="Peng X."/>
            <person name="Wang X."/>
            <person name="Ding L."/>
            <person name="Jin J."/>
            <person name="Teng H."/>
            <person name="Wang Y."/>
            <person name="Pan W."/>
            <person name="Yu F."/>
            <person name="Liao L."/>
            <person name="Li L."/>
            <person name="Ge X."/>
            <person name="Wang P."/>
        </authorList>
    </citation>
    <scope>FUNCTION</scope>
    <scope>CATALYTIC ACTIVITY</scope>
    <scope>PATHWAY</scope>
    <scope>SUBCELLULAR LOCATION</scope>
</reference>
<gene>
    <name evidence="9" type="primary">RNF152</name>
</gene>
<sequence length="203" mass="22357">METLSQDSLLECQICFNYYSPRRRPKLLDCKHTCCSVCLQQMRTSQKDVRCPWCRGVTKLPPGFSVSQLPDDPEVLAVIAIPHTSEHTPVFIKLPSNGCYMLPLPISKERALLPGDMGCRLLPGSQQKSVTVVTIPAEQQPLQGGAPQEAVEEEQDRRGVVKSSTWSGVCTVILVACVLVFLLGIVLHNMSCISKRFTVISCG</sequence>
<organism>
    <name type="scientific">Homo sapiens</name>
    <name type="common">Human</name>
    <dbReference type="NCBI Taxonomy" id="9606"/>
    <lineage>
        <taxon>Eukaryota</taxon>
        <taxon>Metazoa</taxon>
        <taxon>Chordata</taxon>
        <taxon>Craniata</taxon>
        <taxon>Vertebrata</taxon>
        <taxon>Euteleostomi</taxon>
        <taxon>Mammalia</taxon>
        <taxon>Eutheria</taxon>
        <taxon>Euarchontoglires</taxon>
        <taxon>Primates</taxon>
        <taxon>Haplorrhini</taxon>
        <taxon>Catarrhini</taxon>
        <taxon>Hominidae</taxon>
        <taxon>Homo</taxon>
    </lineage>
</organism>
<comment type="function">
    <text evidence="4 5 6">E3 ubiquitin-protein ligase that acts as a negative regulator of mTORC1 signaling by mediating ubiquitination of RagA/RRAGA and RHEB (PubMed:25936802, PubMed:30514904). Catalyzes 'Lys-63'-linked polyubiquitination of RagA/RRAGA in response to amino acid starvation, thereby regulating mTORC1 signaling (PubMed:25936802). Also mediates monoubiquitination of RHEB, promoting its association with the TSC-TBC complex and subsequent inhibition (PubMed:30514904). Also mediates 'Lys-48'-linked polyubiquitination of target proteins and their subsequent targeting to the proteasome for degradation (PubMed:21203937). Induces apoptosis when overexpressed (PubMed:21203937).</text>
</comment>
<comment type="catalytic activity">
    <reaction evidence="5 6">
        <text>S-ubiquitinyl-[E2 ubiquitin-conjugating enzyme]-L-cysteine + [acceptor protein]-L-lysine = [E2 ubiquitin-conjugating enzyme]-L-cysteine + N(6)-ubiquitinyl-[acceptor protein]-L-lysine.</text>
        <dbReference type="EC" id="2.3.2.27"/>
    </reaction>
</comment>
<comment type="pathway">
    <text evidence="5 6">Protein modification; protein ubiquitination.</text>
</comment>
<comment type="subunit">
    <text evidence="1 5">Interacts with RRAGA (inactive GDP-bound form); stimulated by amino acid starvation (PubMed:25936802). Interacts with SEC16A (By similarity).</text>
</comment>
<comment type="interaction">
    <interactant intactId="EBI-2129725">
        <id>Q8N8N0</id>
    </interactant>
    <interactant intactId="EBI-3915253">
        <id>Q15125</id>
        <label>EBP</label>
    </interactant>
    <organismsDiffer>false</organismsDiffer>
    <experiments>3</experiments>
</comment>
<comment type="interaction">
    <interactant intactId="EBI-2129725">
        <id>Q8N8N0</id>
    </interactant>
    <interactant intactId="EBI-17458373">
        <id>P48165</id>
        <label>GJA8</label>
    </interactant>
    <organismsDiffer>false</organismsDiffer>
    <experiments>3</experiments>
</comment>
<comment type="interaction">
    <interactant intactId="EBI-2129725">
        <id>Q8N8N0</id>
    </interactant>
    <interactant intactId="EBI-8632435">
        <id>P43628</id>
        <label>KIR2DL3</label>
    </interactant>
    <organismsDiffer>false</organismsDiffer>
    <experiments>3</experiments>
</comment>
<comment type="interaction">
    <interactant intactId="EBI-2129725">
        <id>Q8N8N0</id>
    </interactant>
    <interactant intactId="EBI-725647">
        <id>Q99732</id>
        <label>LITAF</label>
    </interactant>
    <organismsDiffer>false</organismsDiffer>
    <experiments>3</experiments>
</comment>
<comment type="interaction">
    <interactant intactId="EBI-2129725">
        <id>Q8N8N0</id>
    </interactant>
    <interactant intactId="EBI-2466403">
        <id>O95859</id>
        <label>TSPAN12</label>
    </interactant>
    <organismsDiffer>false</organismsDiffer>
    <experiments>3</experiments>
</comment>
<comment type="subcellular location">
    <subcellularLocation>
        <location evidence="5 8">Lysosome membrane</location>
        <topology evidence="5 8">Single-pass membrane protein</topology>
    </subcellularLocation>
</comment>
<comment type="tissue specificity">
    <text evidence="4">Widely expressed.</text>
</comment>
<comment type="PTM">
    <text evidence="8">Ubiquitinated. Autoubiquitinated in vitro, leading to its degradation by the proteasome (Probable).</text>
</comment>
<comment type="similarity">
    <text evidence="7">Belongs to the RNF152 family.</text>
</comment>
<dbReference type="EC" id="2.3.2.27" evidence="5 6"/>
<dbReference type="EMBL" id="AK096495">
    <property type="protein sequence ID" value="BAC04805.1"/>
    <property type="molecule type" value="mRNA"/>
</dbReference>
<dbReference type="EMBL" id="AK122758">
    <property type="protein sequence ID" value="BAG53711.1"/>
    <property type="molecule type" value="mRNA"/>
</dbReference>
<dbReference type="EMBL" id="AC105094">
    <property type="status" value="NOT_ANNOTATED_CDS"/>
    <property type="molecule type" value="Genomic_DNA"/>
</dbReference>
<dbReference type="EMBL" id="BC094004">
    <property type="protein sequence ID" value="AAH94004.1"/>
    <property type="molecule type" value="mRNA"/>
</dbReference>
<dbReference type="EMBL" id="BC111956">
    <property type="protein sequence ID" value="AAI11957.1"/>
    <property type="molecule type" value="mRNA"/>
</dbReference>
<dbReference type="CCDS" id="CCDS11978.1"/>
<dbReference type="RefSeq" id="NP_775828.1">
    <property type="nucleotide sequence ID" value="NM_173557.3"/>
</dbReference>
<dbReference type="RefSeq" id="XP_005266707.1">
    <property type="nucleotide sequence ID" value="XM_005266650.4"/>
</dbReference>
<dbReference type="RefSeq" id="XP_005266709.1">
    <property type="nucleotide sequence ID" value="XM_005266652.4"/>
</dbReference>
<dbReference type="RefSeq" id="XP_011524180.1">
    <property type="nucleotide sequence ID" value="XM_011525878.3"/>
</dbReference>
<dbReference type="RefSeq" id="XP_011524181.1">
    <property type="nucleotide sequence ID" value="XM_011525879.3"/>
</dbReference>
<dbReference type="RefSeq" id="XP_016881101.1">
    <property type="nucleotide sequence ID" value="XM_017025612.2"/>
</dbReference>
<dbReference type="RefSeq" id="XP_016881102.1">
    <property type="nucleotide sequence ID" value="XM_017025613.1"/>
</dbReference>
<dbReference type="RefSeq" id="XP_047293305.1">
    <property type="nucleotide sequence ID" value="XM_047437349.1"/>
</dbReference>
<dbReference type="RefSeq" id="XP_054174259.1">
    <property type="nucleotide sequence ID" value="XM_054318284.1"/>
</dbReference>
<dbReference type="RefSeq" id="XP_054174260.1">
    <property type="nucleotide sequence ID" value="XM_054318285.1"/>
</dbReference>
<dbReference type="RefSeq" id="XP_054174261.1">
    <property type="nucleotide sequence ID" value="XM_054318286.1"/>
</dbReference>
<dbReference type="RefSeq" id="XP_054174262.1">
    <property type="nucleotide sequence ID" value="XM_054318287.1"/>
</dbReference>
<dbReference type="RefSeq" id="XP_054174263.1">
    <property type="nucleotide sequence ID" value="XM_054318288.1"/>
</dbReference>
<dbReference type="SMR" id="Q8N8N0"/>
<dbReference type="BioGRID" id="128647">
    <property type="interactions" value="29"/>
</dbReference>
<dbReference type="FunCoup" id="Q8N8N0">
    <property type="interactions" value="225"/>
</dbReference>
<dbReference type="IntAct" id="Q8N8N0">
    <property type="interactions" value="10"/>
</dbReference>
<dbReference type="STRING" id="9606.ENSP00000316628"/>
<dbReference type="MoonDB" id="Q8N8N0">
    <property type="type" value="Predicted"/>
</dbReference>
<dbReference type="iPTMnet" id="Q8N8N0"/>
<dbReference type="PhosphoSitePlus" id="Q8N8N0"/>
<dbReference type="BioMuta" id="RNF152"/>
<dbReference type="DMDM" id="41017760"/>
<dbReference type="MassIVE" id="Q8N8N0"/>
<dbReference type="PaxDb" id="9606-ENSP00000316628"/>
<dbReference type="PeptideAtlas" id="Q8N8N0"/>
<dbReference type="Antibodypedia" id="71070">
    <property type="antibodies" value="10 antibodies from 7 providers"/>
</dbReference>
<dbReference type="DNASU" id="220441"/>
<dbReference type="Ensembl" id="ENST00000312828.4">
    <property type="protein sequence ID" value="ENSP00000316628.3"/>
    <property type="gene ID" value="ENSG00000176641.11"/>
</dbReference>
<dbReference type="GeneID" id="220441"/>
<dbReference type="KEGG" id="hsa:220441"/>
<dbReference type="MANE-Select" id="ENST00000312828.4">
    <property type="protein sequence ID" value="ENSP00000316628.3"/>
    <property type="RefSeq nucleotide sequence ID" value="NM_173557.3"/>
    <property type="RefSeq protein sequence ID" value="NP_775828.1"/>
</dbReference>
<dbReference type="UCSC" id="uc002lih.2">
    <property type="organism name" value="human"/>
</dbReference>
<dbReference type="AGR" id="HGNC:26811"/>
<dbReference type="CTD" id="220441"/>
<dbReference type="DisGeNET" id="220441"/>
<dbReference type="GeneCards" id="RNF152"/>
<dbReference type="HGNC" id="HGNC:26811">
    <property type="gene designation" value="RNF152"/>
</dbReference>
<dbReference type="HPA" id="ENSG00000176641">
    <property type="expression patterns" value="Tissue enhanced (kidney)"/>
</dbReference>
<dbReference type="MIM" id="616512">
    <property type="type" value="gene"/>
</dbReference>
<dbReference type="neXtProt" id="NX_Q8N8N0"/>
<dbReference type="OpenTargets" id="ENSG00000176641"/>
<dbReference type="PharmGKB" id="PA134984811"/>
<dbReference type="VEuPathDB" id="HostDB:ENSG00000176641"/>
<dbReference type="eggNOG" id="KOG2177">
    <property type="taxonomic scope" value="Eukaryota"/>
</dbReference>
<dbReference type="GeneTree" id="ENSGT00730000111317"/>
<dbReference type="HOGENOM" id="CLU_1414689_0_0_1"/>
<dbReference type="InParanoid" id="Q8N8N0"/>
<dbReference type="OMA" id="REIRCPW"/>
<dbReference type="OrthoDB" id="6106880at2759"/>
<dbReference type="PAN-GO" id="Q8N8N0">
    <property type="GO annotations" value="5 GO annotations based on evolutionary models"/>
</dbReference>
<dbReference type="PhylomeDB" id="Q8N8N0"/>
<dbReference type="TreeFam" id="TF331690"/>
<dbReference type="PathwayCommons" id="Q8N8N0"/>
<dbReference type="Reactome" id="R-HSA-8866654">
    <property type="pathway name" value="E3 ubiquitin ligases ubiquitinate target proteins"/>
</dbReference>
<dbReference type="SignaLink" id="Q8N8N0"/>
<dbReference type="SIGNOR" id="Q8N8N0"/>
<dbReference type="UniPathway" id="UPA00143"/>
<dbReference type="BioGRID-ORCS" id="220441">
    <property type="hits" value="12 hits in 1190 CRISPR screens"/>
</dbReference>
<dbReference type="ChiTaRS" id="RNF152">
    <property type="organism name" value="human"/>
</dbReference>
<dbReference type="GenomeRNAi" id="220441"/>
<dbReference type="Pharos" id="Q8N8N0">
    <property type="development level" value="Tbio"/>
</dbReference>
<dbReference type="PRO" id="PR:Q8N8N0"/>
<dbReference type="Proteomes" id="UP000005640">
    <property type="component" value="Chromosome 18"/>
</dbReference>
<dbReference type="RNAct" id="Q8N8N0">
    <property type="molecule type" value="protein"/>
</dbReference>
<dbReference type="Bgee" id="ENSG00000176641">
    <property type="expression patterns" value="Expressed in right lobe of liver and 98 other cell types or tissues"/>
</dbReference>
<dbReference type="ExpressionAtlas" id="Q8N8N0">
    <property type="expression patterns" value="baseline and differential"/>
</dbReference>
<dbReference type="GO" id="GO:0005765">
    <property type="term" value="C:lysosomal membrane"/>
    <property type="evidence" value="ECO:0000314"/>
    <property type="project" value="UniProtKB"/>
</dbReference>
<dbReference type="GO" id="GO:0005764">
    <property type="term" value="C:lysosome"/>
    <property type="evidence" value="ECO:0000314"/>
    <property type="project" value="UniProtKB"/>
</dbReference>
<dbReference type="GO" id="GO:0031090">
    <property type="term" value="C:organelle membrane"/>
    <property type="evidence" value="ECO:0000315"/>
    <property type="project" value="UniProtKB"/>
</dbReference>
<dbReference type="GO" id="GO:0031267">
    <property type="term" value="F:small GTPase binding"/>
    <property type="evidence" value="ECO:0000353"/>
    <property type="project" value="UniProtKB"/>
</dbReference>
<dbReference type="GO" id="GO:0061630">
    <property type="term" value="F:ubiquitin protein ligase activity"/>
    <property type="evidence" value="ECO:0000314"/>
    <property type="project" value="UniProtKB"/>
</dbReference>
<dbReference type="GO" id="GO:0004842">
    <property type="term" value="F:ubiquitin-protein transferase activity"/>
    <property type="evidence" value="ECO:0000314"/>
    <property type="project" value="UniProtKB"/>
</dbReference>
<dbReference type="GO" id="GO:0008270">
    <property type="term" value="F:zinc ion binding"/>
    <property type="evidence" value="ECO:0007669"/>
    <property type="project" value="UniProtKB-KW"/>
</dbReference>
<dbReference type="GO" id="GO:0006915">
    <property type="term" value="P:apoptotic process"/>
    <property type="evidence" value="ECO:0000304"/>
    <property type="project" value="UniProtKB"/>
</dbReference>
<dbReference type="GO" id="GO:0034198">
    <property type="term" value="P:cellular response to amino acid starvation"/>
    <property type="evidence" value="ECO:0000314"/>
    <property type="project" value="UniProtKB"/>
</dbReference>
<dbReference type="GO" id="GO:1904262">
    <property type="term" value="P:negative regulation of TORC1 signaling"/>
    <property type="evidence" value="ECO:0000314"/>
    <property type="project" value="UniProtKB"/>
</dbReference>
<dbReference type="GO" id="GO:0010508">
    <property type="term" value="P:positive regulation of autophagy"/>
    <property type="evidence" value="ECO:0000315"/>
    <property type="project" value="UniProtKB"/>
</dbReference>
<dbReference type="GO" id="GO:0070936">
    <property type="term" value="P:protein K48-linked ubiquitination"/>
    <property type="evidence" value="ECO:0000314"/>
    <property type="project" value="UniProtKB"/>
</dbReference>
<dbReference type="GO" id="GO:0070534">
    <property type="term" value="P:protein K63-linked ubiquitination"/>
    <property type="evidence" value="ECO:0000315"/>
    <property type="project" value="UniProtKB"/>
</dbReference>
<dbReference type="GO" id="GO:0006513">
    <property type="term" value="P:protein monoubiquitination"/>
    <property type="evidence" value="ECO:0000314"/>
    <property type="project" value="UniProtKB"/>
</dbReference>
<dbReference type="GO" id="GO:0016567">
    <property type="term" value="P:protein ubiquitination"/>
    <property type="evidence" value="ECO:0000304"/>
    <property type="project" value="Reactome"/>
</dbReference>
<dbReference type="CDD" id="cd16548">
    <property type="entry name" value="RING-HC_RNF152"/>
    <property type="match status" value="1"/>
</dbReference>
<dbReference type="FunFam" id="3.30.40.10:FF:000197">
    <property type="entry name" value="E3 ubiquitin-protein ligase RNF152"/>
    <property type="match status" value="1"/>
</dbReference>
<dbReference type="Gene3D" id="3.30.40.10">
    <property type="entry name" value="Zinc/RING finger domain, C3HC4 (zinc finger)"/>
    <property type="match status" value="1"/>
</dbReference>
<dbReference type="InterPro" id="IPR033609">
    <property type="entry name" value="RING_RNF152"/>
</dbReference>
<dbReference type="InterPro" id="IPR045744">
    <property type="entry name" value="RNF152_C"/>
</dbReference>
<dbReference type="InterPro" id="IPR001841">
    <property type="entry name" value="Znf_RING"/>
</dbReference>
<dbReference type="InterPro" id="IPR013083">
    <property type="entry name" value="Znf_RING/FYVE/PHD"/>
</dbReference>
<dbReference type="PANTHER" id="PTHR25464:SF1">
    <property type="entry name" value="E3 UBIQUITIN-PROTEIN LIGASE RNF152"/>
    <property type="match status" value="1"/>
</dbReference>
<dbReference type="PANTHER" id="PTHR25464">
    <property type="entry name" value="TRIPARTITE MOTIF-CONTAINING PROTEIN 2-LIKE PROTEIN"/>
    <property type="match status" value="1"/>
</dbReference>
<dbReference type="Pfam" id="PF19325">
    <property type="entry name" value="RNF152_C"/>
    <property type="match status" value="1"/>
</dbReference>
<dbReference type="Pfam" id="PF14634">
    <property type="entry name" value="zf-RING_5"/>
    <property type="match status" value="1"/>
</dbReference>
<dbReference type="SMART" id="SM00184">
    <property type="entry name" value="RING"/>
    <property type="match status" value="1"/>
</dbReference>
<dbReference type="SUPFAM" id="SSF57850">
    <property type="entry name" value="RING/U-box"/>
    <property type="match status" value="1"/>
</dbReference>
<dbReference type="PROSITE" id="PS50089">
    <property type="entry name" value="ZF_RING_2"/>
    <property type="match status" value="1"/>
</dbReference>
<proteinExistence type="evidence at protein level"/>
<name>RN152_HUMAN</name>
<feature type="chain" id="PRO_0000056111" description="E3 ubiquitin-protein ligase RNF152">
    <location>
        <begin position="1"/>
        <end position="203"/>
    </location>
</feature>
<feature type="transmembrane region" description="Helical" evidence="2">
    <location>
        <begin position="167"/>
        <end position="187"/>
    </location>
</feature>
<feature type="zinc finger region" description="RING-type" evidence="3">
    <location>
        <begin position="12"/>
        <end position="55"/>
    </location>
</feature>
<feature type="region of interest" description="Necessary for interaction with RRAGA" evidence="5">
    <location>
        <begin position="106"/>
        <end position="165"/>
    </location>
</feature>
<feature type="sequence conflict" description="In Ref. 1; BAG53711." evidence="7" ref="1">
    <original>C</original>
    <variation>S</variation>
    <location>
        <position position="12"/>
    </location>
</feature>